<feature type="chain" id="PRO_0000302514" description="ATP-dependent dethiobiotin synthetase BioD">
    <location>
        <begin position="1"/>
        <end position="222"/>
    </location>
</feature>
<feature type="active site" evidence="1">
    <location>
        <position position="37"/>
    </location>
</feature>
<feature type="binding site" evidence="1">
    <location>
        <begin position="12"/>
        <end position="17"/>
    </location>
    <ligand>
        <name>ATP</name>
        <dbReference type="ChEBI" id="CHEBI:30616"/>
    </ligand>
</feature>
<feature type="binding site" evidence="1">
    <location>
        <position position="16"/>
    </location>
    <ligand>
        <name>Mg(2+)</name>
        <dbReference type="ChEBI" id="CHEBI:18420"/>
    </ligand>
</feature>
<feature type="binding site" evidence="1">
    <location>
        <position position="41"/>
    </location>
    <ligand>
        <name>substrate</name>
    </ligand>
</feature>
<feature type="binding site" evidence="1">
    <location>
        <position position="54"/>
    </location>
    <ligand>
        <name>ATP</name>
        <dbReference type="ChEBI" id="CHEBI:30616"/>
    </ligand>
</feature>
<feature type="binding site" evidence="1">
    <location>
        <position position="54"/>
    </location>
    <ligand>
        <name>Mg(2+)</name>
        <dbReference type="ChEBI" id="CHEBI:18420"/>
    </ligand>
</feature>
<feature type="binding site" evidence="1">
    <location>
        <begin position="116"/>
        <end position="119"/>
    </location>
    <ligand>
        <name>ATP</name>
        <dbReference type="ChEBI" id="CHEBI:30616"/>
    </ligand>
</feature>
<feature type="binding site" evidence="1">
    <location>
        <position position="116"/>
    </location>
    <ligand>
        <name>Mg(2+)</name>
        <dbReference type="ChEBI" id="CHEBI:18420"/>
    </ligand>
</feature>
<feature type="binding site" evidence="1">
    <location>
        <begin position="176"/>
        <end position="177"/>
    </location>
    <ligand>
        <name>ATP</name>
        <dbReference type="ChEBI" id="CHEBI:30616"/>
    </ligand>
</feature>
<feature type="binding site" evidence="1">
    <location>
        <begin position="206"/>
        <end position="208"/>
    </location>
    <ligand>
        <name>ATP</name>
        <dbReference type="ChEBI" id="CHEBI:30616"/>
    </ligand>
</feature>
<feature type="binding site" evidence="1">
    <location>
        <position position="213"/>
    </location>
    <ligand>
        <name>ATP</name>
        <dbReference type="ChEBI" id="CHEBI:30616"/>
    </ligand>
</feature>
<organism>
    <name type="scientific">Idiomarina loihiensis (strain ATCC BAA-735 / DSM 15497 / L2-TR)</name>
    <dbReference type="NCBI Taxonomy" id="283942"/>
    <lineage>
        <taxon>Bacteria</taxon>
        <taxon>Pseudomonadati</taxon>
        <taxon>Pseudomonadota</taxon>
        <taxon>Gammaproteobacteria</taxon>
        <taxon>Alteromonadales</taxon>
        <taxon>Idiomarinaceae</taxon>
        <taxon>Idiomarina</taxon>
    </lineage>
</organism>
<dbReference type="EC" id="6.3.3.3" evidence="1"/>
<dbReference type="EMBL" id="AE017340">
    <property type="protein sequence ID" value="AAV82161.1"/>
    <property type="molecule type" value="Genomic_DNA"/>
</dbReference>
<dbReference type="RefSeq" id="WP_011234567.1">
    <property type="nucleotide sequence ID" value="NC_006512.1"/>
</dbReference>
<dbReference type="SMR" id="Q5QZ19"/>
<dbReference type="STRING" id="283942.IL1321"/>
<dbReference type="GeneID" id="41336497"/>
<dbReference type="KEGG" id="ilo:IL1321"/>
<dbReference type="eggNOG" id="COG0132">
    <property type="taxonomic scope" value="Bacteria"/>
</dbReference>
<dbReference type="HOGENOM" id="CLU_072551_0_0_6"/>
<dbReference type="OrthoDB" id="9802097at2"/>
<dbReference type="UniPathway" id="UPA00078">
    <property type="reaction ID" value="UER00161"/>
</dbReference>
<dbReference type="Proteomes" id="UP000001171">
    <property type="component" value="Chromosome"/>
</dbReference>
<dbReference type="GO" id="GO:0005829">
    <property type="term" value="C:cytosol"/>
    <property type="evidence" value="ECO:0007669"/>
    <property type="project" value="TreeGrafter"/>
</dbReference>
<dbReference type="GO" id="GO:0005524">
    <property type="term" value="F:ATP binding"/>
    <property type="evidence" value="ECO:0007669"/>
    <property type="project" value="UniProtKB-UniRule"/>
</dbReference>
<dbReference type="GO" id="GO:0004141">
    <property type="term" value="F:dethiobiotin synthase activity"/>
    <property type="evidence" value="ECO:0007669"/>
    <property type="project" value="UniProtKB-UniRule"/>
</dbReference>
<dbReference type="GO" id="GO:0000287">
    <property type="term" value="F:magnesium ion binding"/>
    <property type="evidence" value="ECO:0007669"/>
    <property type="project" value="UniProtKB-UniRule"/>
</dbReference>
<dbReference type="GO" id="GO:0009102">
    <property type="term" value="P:biotin biosynthetic process"/>
    <property type="evidence" value="ECO:0007669"/>
    <property type="project" value="UniProtKB-UniRule"/>
</dbReference>
<dbReference type="CDD" id="cd03109">
    <property type="entry name" value="DTBS"/>
    <property type="match status" value="1"/>
</dbReference>
<dbReference type="FunFam" id="3.40.50.300:FF:000292">
    <property type="entry name" value="ATP-dependent dethiobiotin synthetase BioD"/>
    <property type="match status" value="1"/>
</dbReference>
<dbReference type="Gene3D" id="3.40.50.300">
    <property type="entry name" value="P-loop containing nucleotide triphosphate hydrolases"/>
    <property type="match status" value="1"/>
</dbReference>
<dbReference type="HAMAP" id="MF_00336">
    <property type="entry name" value="BioD"/>
    <property type="match status" value="1"/>
</dbReference>
<dbReference type="InterPro" id="IPR004472">
    <property type="entry name" value="DTB_synth_BioD"/>
</dbReference>
<dbReference type="InterPro" id="IPR027417">
    <property type="entry name" value="P-loop_NTPase"/>
</dbReference>
<dbReference type="NCBIfam" id="TIGR00347">
    <property type="entry name" value="bioD"/>
    <property type="match status" value="1"/>
</dbReference>
<dbReference type="PANTHER" id="PTHR43210">
    <property type="entry name" value="DETHIOBIOTIN SYNTHETASE"/>
    <property type="match status" value="1"/>
</dbReference>
<dbReference type="PANTHER" id="PTHR43210:SF5">
    <property type="entry name" value="DETHIOBIOTIN SYNTHETASE"/>
    <property type="match status" value="1"/>
</dbReference>
<dbReference type="Pfam" id="PF13500">
    <property type="entry name" value="AAA_26"/>
    <property type="match status" value="1"/>
</dbReference>
<dbReference type="PIRSF" id="PIRSF006755">
    <property type="entry name" value="DTB_synth"/>
    <property type="match status" value="1"/>
</dbReference>
<dbReference type="SUPFAM" id="SSF52540">
    <property type="entry name" value="P-loop containing nucleoside triphosphate hydrolases"/>
    <property type="match status" value="1"/>
</dbReference>
<proteinExistence type="inferred from homology"/>
<comment type="function">
    <text evidence="1">Catalyzes a mechanistically unusual reaction, the ATP-dependent insertion of CO2 between the N7 and N8 nitrogen atoms of 7,8-diaminopelargonic acid (DAPA, also called 7,8-diammoniononanoate) to form a ureido ring.</text>
</comment>
<comment type="catalytic activity">
    <reaction evidence="1">
        <text>(7R,8S)-7,8-diammoniononanoate + CO2 + ATP = (4R,5S)-dethiobiotin + ADP + phosphate + 3 H(+)</text>
        <dbReference type="Rhea" id="RHEA:15805"/>
        <dbReference type="ChEBI" id="CHEBI:15378"/>
        <dbReference type="ChEBI" id="CHEBI:16526"/>
        <dbReference type="ChEBI" id="CHEBI:30616"/>
        <dbReference type="ChEBI" id="CHEBI:43474"/>
        <dbReference type="ChEBI" id="CHEBI:149469"/>
        <dbReference type="ChEBI" id="CHEBI:149473"/>
        <dbReference type="ChEBI" id="CHEBI:456216"/>
        <dbReference type="EC" id="6.3.3.3"/>
    </reaction>
</comment>
<comment type="cofactor">
    <cofactor evidence="1">
        <name>Mg(2+)</name>
        <dbReference type="ChEBI" id="CHEBI:18420"/>
    </cofactor>
</comment>
<comment type="pathway">
    <text evidence="1">Cofactor biosynthesis; biotin biosynthesis; biotin from 7,8-diaminononanoate: step 1/2.</text>
</comment>
<comment type="subunit">
    <text evidence="1">Homodimer.</text>
</comment>
<comment type="subcellular location">
    <subcellularLocation>
        <location evidence="1">Cytoplasm</location>
    </subcellularLocation>
</comment>
<comment type="similarity">
    <text evidence="1">Belongs to the dethiobiotin synthetase family.</text>
</comment>
<sequence>MNTYFIAGTDTDAGKTVAACAFVQYLVKQSQQVAVMKPVASGCHWQNGQLVNEDALNLMRQSNTSFDYDRVNPYTFEAAIAPHIAAADSGVVIDKERLLKAVDWFHERPIDSLVIEGAGGWQLPLASGLRMPQVVKEVNAKVVLVVGLKLGCLNHALLSLQSIKQEGCDVAGWIAVQTGPEPMPRQAENLASLRELLDEKELASIPYLPGWTEEDLSIYFHK</sequence>
<gene>
    <name evidence="1" type="primary">bioD</name>
    <name type="ordered locus">IL1321</name>
</gene>
<protein>
    <recommendedName>
        <fullName evidence="1">ATP-dependent dethiobiotin synthetase BioD</fullName>
        <ecNumber evidence="1">6.3.3.3</ecNumber>
    </recommendedName>
    <alternativeName>
        <fullName evidence="1">DTB synthetase</fullName>
        <shortName evidence="1">DTBS</shortName>
    </alternativeName>
    <alternativeName>
        <fullName evidence="1">Dethiobiotin synthase</fullName>
    </alternativeName>
</protein>
<evidence type="ECO:0000255" key="1">
    <source>
        <dbReference type="HAMAP-Rule" id="MF_00336"/>
    </source>
</evidence>
<name>BIOD_IDILO</name>
<reference key="1">
    <citation type="journal article" date="2004" name="Proc. Natl. Acad. Sci. U.S.A.">
        <title>Genome sequence of the deep-sea gamma-proteobacterium Idiomarina loihiensis reveals amino acid fermentation as a source of carbon and energy.</title>
        <authorList>
            <person name="Hou S."/>
            <person name="Saw J.H."/>
            <person name="Lee K.S."/>
            <person name="Freitas T.A."/>
            <person name="Belisle C."/>
            <person name="Kawarabayasi Y."/>
            <person name="Donachie S.P."/>
            <person name="Pikina A."/>
            <person name="Galperin M.Y."/>
            <person name="Koonin E.V."/>
            <person name="Makarova K.S."/>
            <person name="Omelchenko M.V."/>
            <person name="Sorokin A."/>
            <person name="Wolf Y.I."/>
            <person name="Li Q.X."/>
            <person name="Keum Y.S."/>
            <person name="Campbell S."/>
            <person name="Denery J."/>
            <person name="Aizawa S."/>
            <person name="Shibata S."/>
            <person name="Malahoff A."/>
            <person name="Alam M."/>
        </authorList>
    </citation>
    <scope>NUCLEOTIDE SEQUENCE [LARGE SCALE GENOMIC DNA]</scope>
    <source>
        <strain>ATCC BAA-735 / DSM 15497 / L2-TR</strain>
    </source>
</reference>
<keyword id="KW-0067">ATP-binding</keyword>
<keyword id="KW-0093">Biotin biosynthesis</keyword>
<keyword id="KW-0963">Cytoplasm</keyword>
<keyword id="KW-0436">Ligase</keyword>
<keyword id="KW-0460">Magnesium</keyword>
<keyword id="KW-0479">Metal-binding</keyword>
<keyword id="KW-0547">Nucleotide-binding</keyword>
<keyword id="KW-1185">Reference proteome</keyword>
<accession>Q5QZ19</accession>